<gene>
    <name evidence="1" type="primary">pcrB</name>
    <name type="ordered locus">Aflv_0245</name>
</gene>
<protein>
    <recommendedName>
        <fullName evidence="1">Heptaprenylglyceryl phosphate synthase</fullName>
        <shortName evidence="1">HepGP synthase</shortName>
        <ecNumber evidence="1">2.5.1.n9</ecNumber>
    </recommendedName>
    <alternativeName>
        <fullName evidence="1">Glycerol-1-phosphate heptaprenyltransferase</fullName>
    </alternativeName>
</protein>
<accession>B7GFU9</accession>
<evidence type="ECO:0000255" key="1">
    <source>
        <dbReference type="HAMAP-Rule" id="MF_00112"/>
    </source>
</evidence>
<comment type="function">
    <text evidence="1">Prenyltransferase that catalyzes in vivo the transfer of the heptaprenyl moiety of heptaprenyl pyrophosphate (HepPP; 35 carbon atoms) to the C3 hydroxyl of sn-glycerol-1-phosphate (G1P), producing heptaprenylglyceryl phosphate (HepGP). This reaction is an ether-bond-formation step in the biosynthesis of archaea-type G1P-based membrane lipids found in Bacillales.</text>
</comment>
<comment type="catalytic activity">
    <reaction evidence="1">
        <text>sn-glycerol 1-phosphate + all-trans-heptaprenyl diphosphate = 3-heptaprenyl-sn-glycero-1-phosphate + diphosphate</text>
        <dbReference type="Rhea" id="RHEA:33495"/>
        <dbReference type="ChEBI" id="CHEBI:33019"/>
        <dbReference type="ChEBI" id="CHEBI:57685"/>
        <dbReference type="ChEBI" id="CHEBI:58206"/>
        <dbReference type="ChEBI" id="CHEBI:64781"/>
        <dbReference type="EC" id="2.5.1.n9"/>
    </reaction>
</comment>
<comment type="cofactor">
    <cofactor evidence="1">
        <name>Mg(2+)</name>
        <dbReference type="ChEBI" id="CHEBI:18420"/>
    </cofactor>
</comment>
<comment type="pathway">
    <text evidence="1">Membrane lipid metabolism; glycerophospholipid metabolism.</text>
</comment>
<comment type="subunit">
    <text evidence="1">Homodimer.</text>
</comment>
<comment type="similarity">
    <text evidence="1">Belongs to the GGGP/HepGP synthase family. Group I subfamily.</text>
</comment>
<sequence>MNEITTWRHVFKLDPNKEITDEQLEQVCESGTDAIIVGGTDGVTLENVIDLLARVRRFSVPCALEVSDIEAITPGFDYYFIPMVLNSRDLTWLIDLHHEAVKQFGDLINWEELFVEGYCILNDECKAASLTSARTNVTEEDVIAYARMAEHMYHFPIFYMEYSGRYGDVALVEKVKRTLERTRLFYGGGIHTPEQAKEMAMWADTVVVGNAIYTNLQMALQTVEAVKGKSA</sequence>
<name>PCRB_ANOFW</name>
<dbReference type="EC" id="2.5.1.n9" evidence="1"/>
<dbReference type="EMBL" id="CP000922">
    <property type="protein sequence ID" value="ACJ32629.1"/>
    <property type="molecule type" value="Genomic_DNA"/>
</dbReference>
<dbReference type="RefSeq" id="WP_012573966.1">
    <property type="nucleotide sequence ID" value="NC_011567.1"/>
</dbReference>
<dbReference type="SMR" id="B7GFU9"/>
<dbReference type="STRING" id="491915.Aflv_0245"/>
<dbReference type="GeneID" id="7036477"/>
<dbReference type="KEGG" id="afl:Aflv_0245"/>
<dbReference type="PATRIC" id="fig|491915.6.peg.250"/>
<dbReference type="eggNOG" id="COG1646">
    <property type="taxonomic scope" value="Bacteria"/>
</dbReference>
<dbReference type="HOGENOM" id="CLU_095211_0_0_9"/>
<dbReference type="UniPathway" id="UPA00940"/>
<dbReference type="Proteomes" id="UP000000742">
    <property type="component" value="Chromosome"/>
</dbReference>
<dbReference type="GO" id="GO:0120536">
    <property type="term" value="F:heptaprenylglyceryl phosphate synthase activity"/>
    <property type="evidence" value="ECO:0007669"/>
    <property type="project" value="RHEA"/>
</dbReference>
<dbReference type="GO" id="GO:0000287">
    <property type="term" value="F:magnesium ion binding"/>
    <property type="evidence" value="ECO:0007669"/>
    <property type="project" value="UniProtKB-UniRule"/>
</dbReference>
<dbReference type="GO" id="GO:0046474">
    <property type="term" value="P:glycerophospholipid biosynthetic process"/>
    <property type="evidence" value="ECO:0007669"/>
    <property type="project" value="UniProtKB-UniRule"/>
</dbReference>
<dbReference type="CDD" id="cd02812">
    <property type="entry name" value="PcrB_like"/>
    <property type="match status" value="1"/>
</dbReference>
<dbReference type="FunFam" id="3.20.20.390:FF:000001">
    <property type="entry name" value="Heptaprenylglyceryl phosphate synthase"/>
    <property type="match status" value="1"/>
</dbReference>
<dbReference type="Gene3D" id="3.20.20.390">
    <property type="entry name" value="FMN-linked oxidoreductases"/>
    <property type="match status" value="1"/>
</dbReference>
<dbReference type="HAMAP" id="MF_00112">
    <property type="entry name" value="GGGP_HepGP_synthase"/>
    <property type="match status" value="1"/>
</dbReference>
<dbReference type="InterPro" id="IPR039074">
    <property type="entry name" value="GGGP/HepGP_synthase_I"/>
</dbReference>
<dbReference type="InterPro" id="IPR038597">
    <property type="entry name" value="GGGP/HepGP_synthase_sf"/>
</dbReference>
<dbReference type="InterPro" id="IPR008205">
    <property type="entry name" value="GGGP_HepGP_synthase"/>
</dbReference>
<dbReference type="NCBIfam" id="TIGR01768">
    <property type="entry name" value="GGGP-family"/>
    <property type="match status" value="1"/>
</dbReference>
<dbReference type="NCBIfam" id="NF003197">
    <property type="entry name" value="PRK04169.1-1"/>
    <property type="match status" value="1"/>
</dbReference>
<dbReference type="NCBIfam" id="NF003199">
    <property type="entry name" value="PRK04169.1-3"/>
    <property type="match status" value="1"/>
</dbReference>
<dbReference type="PANTHER" id="PTHR40029">
    <property type="match status" value="1"/>
</dbReference>
<dbReference type="PANTHER" id="PTHR40029:SF2">
    <property type="entry name" value="HEPTAPRENYLGLYCERYL PHOSPHATE SYNTHASE"/>
    <property type="match status" value="1"/>
</dbReference>
<dbReference type="Pfam" id="PF01884">
    <property type="entry name" value="PcrB"/>
    <property type="match status" value="1"/>
</dbReference>
<dbReference type="SUPFAM" id="SSF51395">
    <property type="entry name" value="FMN-linked oxidoreductases"/>
    <property type="match status" value="1"/>
</dbReference>
<organism>
    <name type="scientific">Anoxybacillus flavithermus (strain DSM 21510 / WK1)</name>
    <dbReference type="NCBI Taxonomy" id="491915"/>
    <lineage>
        <taxon>Bacteria</taxon>
        <taxon>Bacillati</taxon>
        <taxon>Bacillota</taxon>
        <taxon>Bacilli</taxon>
        <taxon>Bacillales</taxon>
        <taxon>Anoxybacillaceae</taxon>
        <taxon>Anoxybacillus</taxon>
    </lineage>
</organism>
<reference key="1">
    <citation type="journal article" date="2008" name="Genome Biol.">
        <title>Encapsulated in silica: genome, proteome and physiology of the thermophilic bacterium Anoxybacillus flavithermus WK1.</title>
        <authorList>
            <person name="Saw J.H."/>
            <person name="Mountain B.W."/>
            <person name="Feng L."/>
            <person name="Omelchenko M.V."/>
            <person name="Hou S."/>
            <person name="Saito J.A."/>
            <person name="Stott M.B."/>
            <person name="Li D."/>
            <person name="Zhao G."/>
            <person name="Wu J."/>
            <person name="Galperin M.Y."/>
            <person name="Koonin E.V."/>
            <person name="Makarova K.S."/>
            <person name="Wolf Y.I."/>
            <person name="Rigden D.J."/>
            <person name="Dunfield P.F."/>
            <person name="Wang L."/>
            <person name="Alam M."/>
        </authorList>
    </citation>
    <scope>NUCLEOTIDE SEQUENCE [LARGE SCALE GENOMIC DNA]</scope>
    <source>
        <strain>DSM 21510 / WK1</strain>
    </source>
</reference>
<keyword id="KW-0444">Lipid biosynthesis</keyword>
<keyword id="KW-0443">Lipid metabolism</keyword>
<keyword id="KW-0460">Magnesium</keyword>
<keyword id="KW-0479">Metal-binding</keyword>
<keyword id="KW-0594">Phospholipid biosynthesis</keyword>
<keyword id="KW-1208">Phospholipid metabolism</keyword>
<keyword id="KW-0808">Transferase</keyword>
<feature type="chain" id="PRO_1000117514" description="Heptaprenylglyceryl phosphate synthase">
    <location>
        <begin position="1"/>
        <end position="231"/>
    </location>
</feature>
<feature type="binding site" evidence="1">
    <location>
        <position position="12"/>
    </location>
    <ligand>
        <name>sn-glycerol 1-phosphate</name>
        <dbReference type="ChEBI" id="CHEBI:57685"/>
    </ligand>
</feature>
<feature type="binding site" evidence="1">
    <location>
        <position position="14"/>
    </location>
    <ligand>
        <name>Mg(2+)</name>
        <dbReference type="ChEBI" id="CHEBI:18420"/>
    </ligand>
</feature>
<feature type="binding site" evidence="1">
    <location>
        <position position="40"/>
    </location>
    <ligand>
        <name>Mg(2+)</name>
        <dbReference type="ChEBI" id="CHEBI:18420"/>
    </ligand>
</feature>
<feature type="binding site" evidence="1">
    <location>
        <begin position="159"/>
        <end position="164"/>
    </location>
    <ligand>
        <name>sn-glycerol 1-phosphate</name>
        <dbReference type="ChEBI" id="CHEBI:57685"/>
    </ligand>
</feature>
<feature type="binding site" evidence="1">
    <location>
        <position position="189"/>
    </location>
    <ligand>
        <name>sn-glycerol 1-phosphate</name>
        <dbReference type="ChEBI" id="CHEBI:57685"/>
    </ligand>
</feature>
<feature type="binding site" evidence="1">
    <location>
        <begin position="209"/>
        <end position="210"/>
    </location>
    <ligand>
        <name>sn-glycerol 1-phosphate</name>
        <dbReference type="ChEBI" id="CHEBI:57685"/>
    </ligand>
</feature>
<proteinExistence type="inferred from homology"/>